<name>RL22_BUCA5</name>
<comment type="function">
    <text evidence="1">This protein binds specifically to 23S rRNA; its binding is stimulated by other ribosomal proteins, e.g. L4, L17, and L20. It is important during the early stages of 50S assembly. It makes multiple contacts with different domains of the 23S rRNA in the assembled 50S subunit and ribosome (By similarity).</text>
</comment>
<comment type="function">
    <text evidence="1">The globular domain of the protein is located near the polypeptide exit tunnel on the outside of the subunit, while an extended beta-hairpin is found that lines the wall of the exit tunnel in the center of the 70S ribosome.</text>
</comment>
<comment type="subunit">
    <text evidence="1">Part of the 50S ribosomal subunit.</text>
</comment>
<comment type="similarity">
    <text evidence="1">Belongs to the universal ribosomal protein uL22 family.</text>
</comment>
<dbReference type="EMBL" id="CP001161">
    <property type="protein sequence ID" value="ACL30863.1"/>
    <property type="molecule type" value="Genomic_DNA"/>
</dbReference>
<dbReference type="RefSeq" id="WP_009874470.1">
    <property type="nucleotide sequence ID" value="NC_011833.1"/>
</dbReference>
<dbReference type="SMR" id="B8D9U2"/>
<dbReference type="KEGG" id="bap:BUAP5A_512"/>
<dbReference type="HOGENOM" id="CLU_083987_3_3_6"/>
<dbReference type="OrthoDB" id="9805969at2"/>
<dbReference type="Proteomes" id="UP000006904">
    <property type="component" value="Chromosome"/>
</dbReference>
<dbReference type="GO" id="GO:0022625">
    <property type="term" value="C:cytosolic large ribosomal subunit"/>
    <property type="evidence" value="ECO:0007669"/>
    <property type="project" value="TreeGrafter"/>
</dbReference>
<dbReference type="GO" id="GO:0019843">
    <property type="term" value="F:rRNA binding"/>
    <property type="evidence" value="ECO:0007669"/>
    <property type="project" value="UniProtKB-UniRule"/>
</dbReference>
<dbReference type="GO" id="GO:0003735">
    <property type="term" value="F:structural constituent of ribosome"/>
    <property type="evidence" value="ECO:0007669"/>
    <property type="project" value="InterPro"/>
</dbReference>
<dbReference type="GO" id="GO:0006412">
    <property type="term" value="P:translation"/>
    <property type="evidence" value="ECO:0007669"/>
    <property type="project" value="UniProtKB-UniRule"/>
</dbReference>
<dbReference type="CDD" id="cd00336">
    <property type="entry name" value="Ribosomal_L22"/>
    <property type="match status" value="1"/>
</dbReference>
<dbReference type="FunFam" id="3.90.470.10:FF:000001">
    <property type="entry name" value="50S ribosomal protein L22"/>
    <property type="match status" value="1"/>
</dbReference>
<dbReference type="Gene3D" id="3.90.470.10">
    <property type="entry name" value="Ribosomal protein L22/L17"/>
    <property type="match status" value="1"/>
</dbReference>
<dbReference type="HAMAP" id="MF_01331_B">
    <property type="entry name" value="Ribosomal_uL22_B"/>
    <property type="match status" value="1"/>
</dbReference>
<dbReference type="InterPro" id="IPR001063">
    <property type="entry name" value="Ribosomal_uL22"/>
</dbReference>
<dbReference type="InterPro" id="IPR005727">
    <property type="entry name" value="Ribosomal_uL22_bac/chlpt-type"/>
</dbReference>
<dbReference type="InterPro" id="IPR047867">
    <property type="entry name" value="Ribosomal_uL22_bac/org-type"/>
</dbReference>
<dbReference type="InterPro" id="IPR018260">
    <property type="entry name" value="Ribosomal_uL22_CS"/>
</dbReference>
<dbReference type="InterPro" id="IPR036394">
    <property type="entry name" value="Ribosomal_uL22_sf"/>
</dbReference>
<dbReference type="NCBIfam" id="TIGR01044">
    <property type="entry name" value="rplV_bact"/>
    <property type="match status" value="1"/>
</dbReference>
<dbReference type="PANTHER" id="PTHR13501">
    <property type="entry name" value="CHLOROPLAST 50S RIBOSOMAL PROTEIN L22-RELATED"/>
    <property type="match status" value="1"/>
</dbReference>
<dbReference type="PANTHER" id="PTHR13501:SF8">
    <property type="entry name" value="LARGE RIBOSOMAL SUBUNIT PROTEIN UL22M"/>
    <property type="match status" value="1"/>
</dbReference>
<dbReference type="Pfam" id="PF00237">
    <property type="entry name" value="Ribosomal_L22"/>
    <property type="match status" value="1"/>
</dbReference>
<dbReference type="SUPFAM" id="SSF54843">
    <property type="entry name" value="Ribosomal protein L22"/>
    <property type="match status" value="1"/>
</dbReference>
<dbReference type="PROSITE" id="PS00464">
    <property type="entry name" value="RIBOSOMAL_L22"/>
    <property type="match status" value="1"/>
</dbReference>
<protein>
    <recommendedName>
        <fullName evidence="1">Large ribosomal subunit protein uL22</fullName>
    </recommendedName>
    <alternativeName>
        <fullName evidence="2">50S ribosomal protein L22</fullName>
    </alternativeName>
</protein>
<sequence>METLAQHRQARSSAQKVRLIVDLIRGKKVPQALNILTYTNKKAAFLVKKVVESAVANAEHNDGADIDKLRIKKIFVNEGSTMKRMMPRAKGRADRILKRTSHITVIVSDR</sequence>
<organism>
    <name type="scientific">Buchnera aphidicola subsp. Acyrthosiphon pisum (strain 5A)</name>
    <dbReference type="NCBI Taxonomy" id="563178"/>
    <lineage>
        <taxon>Bacteria</taxon>
        <taxon>Pseudomonadati</taxon>
        <taxon>Pseudomonadota</taxon>
        <taxon>Gammaproteobacteria</taxon>
        <taxon>Enterobacterales</taxon>
        <taxon>Erwiniaceae</taxon>
        <taxon>Buchnera</taxon>
    </lineage>
</organism>
<proteinExistence type="inferred from homology"/>
<feature type="chain" id="PRO_1000166049" description="Large ribosomal subunit protein uL22">
    <location>
        <begin position="1"/>
        <end position="110"/>
    </location>
</feature>
<evidence type="ECO:0000255" key="1">
    <source>
        <dbReference type="HAMAP-Rule" id="MF_01331"/>
    </source>
</evidence>
<evidence type="ECO:0000305" key="2"/>
<reference key="1">
    <citation type="journal article" date="2009" name="Science">
        <title>The dynamics and time scale of ongoing genomic erosion in symbiotic bacteria.</title>
        <authorList>
            <person name="Moran N.A."/>
            <person name="McLaughlin H.J."/>
            <person name="Sorek R."/>
        </authorList>
    </citation>
    <scope>NUCLEOTIDE SEQUENCE [LARGE SCALE GENOMIC DNA]</scope>
    <source>
        <strain>5A</strain>
    </source>
</reference>
<accession>B8D9U2</accession>
<gene>
    <name evidence="1" type="primary">rplV</name>
    <name type="ordered locus">BUAP5A_512</name>
</gene>
<keyword id="KW-0687">Ribonucleoprotein</keyword>
<keyword id="KW-0689">Ribosomal protein</keyword>
<keyword id="KW-0694">RNA-binding</keyword>
<keyword id="KW-0699">rRNA-binding</keyword>